<evidence type="ECO:0000255" key="1"/>
<evidence type="ECO:0000305" key="2"/>
<feature type="chain" id="PRO_0000101383" description="Uncharacterized protein RP506">
    <location>
        <begin position="1"/>
        <end position="201"/>
    </location>
</feature>
<feature type="transmembrane region" description="Helical" evidence="1">
    <location>
        <begin position="11"/>
        <end position="31"/>
    </location>
</feature>
<name>Y506_RICPR</name>
<organism>
    <name type="scientific">Rickettsia prowazekii (strain Madrid E)</name>
    <dbReference type="NCBI Taxonomy" id="272947"/>
    <lineage>
        <taxon>Bacteria</taxon>
        <taxon>Pseudomonadati</taxon>
        <taxon>Pseudomonadota</taxon>
        <taxon>Alphaproteobacteria</taxon>
        <taxon>Rickettsiales</taxon>
        <taxon>Rickettsiaceae</taxon>
        <taxon>Rickettsieae</taxon>
        <taxon>Rickettsia</taxon>
        <taxon>typhus group</taxon>
    </lineage>
</organism>
<protein>
    <recommendedName>
        <fullName>Uncharacterized protein RP506</fullName>
    </recommendedName>
</protein>
<dbReference type="EMBL" id="AJ235272">
    <property type="protein sequence ID" value="CAA14958.1"/>
    <property type="molecule type" value="Genomic_DNA"/>
</dbReference>
<dbReference type="PIR" id="D71654">
    <property type="entry name" value="D71654"/>
</dbReference>
<dbReference type="RefSeq" id="NP_220882.1">
    <property type="nucleotide sequence ID" value="NC_000963.1"/>
</dbReference>
<dbReference type="SMR" id="Q9ZD41"/>
<dbReference type="STRING" id="272947.gene:17555586"/>
<dbReference type="EnsemblBacteria" id="CAA14958">
    <property type="protein sequence ID" value="CAA14958"/>
    <property type="gene ID" value="CAA14958"/>
</dbReference>
<dbReference type="KEGG" id="rpr:RP506"/>
<dbReference type="PATRIC" id="fig|272947.5.peg.515"/>
<dbReference type="eggNOG" id="COG5375">
    <property type="taxonomic scope" value="Bacteria"/>
</dbReference>
<dbReference type="HOGENOM" id="CLU_128754_0_0_5"/>
<dbReference type="OrthoDB" id="7160531at2"/>
<dbReference type="Proteomes" id="UP000002480">
    <property type="component" value="Chromosome"/>
</dbReference>
<dbReference type="GO" id="GO:0016020">
    <property type="term" value="C:membrane"/>
    <property type="evidence" value="ECO:0007669"/>
    <property type="project" value="UniProtKB-SubCell"/>
</dbReference>
<dbReference type="InterPro" id="IPR010664">
    <property type="entry name" value="LipoPS_assembly_LptC-rel"/>
</dbReference>
<dbReference type="Pfam" id="PF06835">
    <property type="entry name" value="LptC"/>
    <property type="match status" value="1"/>
</dbReference>
<keyword id="KW-0472">Membrane</keyword>
<keyword id="KW-1185">Reference proteome</keyword>
<keyword id="KW-0812">Transmembrane</keyword>
<keyword id="KW-1133">Transmembrane helix</keyword>
<gene>
    <name type="ordered locus">RP506</name>
</gene>
<sequence length="201" mass="23279">MPSFYKLRKKIWKSLYLLIIVGMLYIGYILIKSGYINEKNDINVTKKNLNLRDNKNYDLKYNVILQDSIFEGVNKNLNAYKIKTERAIKESGNKYKLDIINAIYNINQDQALIITAKEGFLDQESNILDLKNDIKLFFDEIIFNTNNARINLVNQNIYGNSSAKLLYKNSSITSDSFNTMDENNIIIFKGNVSTIIDLSDY</sequence>
<accession>Q9ZD41</accession>
<comment type="subcellular location">
    <subcellularLocation>
        <location evidence="2">Membrane</location>
        <topology evidence="2">Single-pass membrane protein</topology>
    </subcellularLocation>
</comment>
<proteinExistence type="predicted"/>
<reference key="1">
    <citation type="journal article" date="1998" name="Nature">
        <title>The genome sequence of Rickettsia prowazekii and the origin of mitochondria.</title>
        <authorList>
            <person name="Andersson S.G.E."/>
            <person name="Zomorodipour A."/>
            <person name="Andersson J.O."/>
            <person name="Sicheritz-Ponten T."/>
            <person name="Alsmark U.C.M."/>
            <person name="Podowski R.M."/>
            <person name="Naeslund A.K."/>
            <person name="Eriksson A.-S."/>
            <person name="Winkler H.H."/>
            <person name="Kurland C.G."/>
        </authorList>
    </citation>
    <scope>NUCLEOTIDE SEQUENCE [LARGE SCALE GENOMIC DNA]</scope>
    <source>
        <strain>Madrid E</strain>
    </source>
</reference>